<comment type="function">
    <text evidence="1">Catalytic subunit of the tRNA-splicing ligase complex that acts by directly joining spliced tRNA halves to mature-sized tRNAs by incorporating the precursor-derived splice junction phosphate into the mature tRNA as a canonical 3',5'-phosphodiester. May act as an RNA ligase with broad substrate specificity, and may function toward other RNAs.</text>
</comment>
<comment type="catalytic activity">
    <reaction evidence="1">
        <text>a 3'-end 3'-phospho-ribonucleotide-RNA + a 5'-end dephospho-ribonucleoside-RNA + GTP = a ribonucleotidyl-ribonucleotide-RNA + GMP + diphosphate</text>
        <dbReference type="Rhea" id="RHEA:68076"/>
        <dbReference type="Rhea" id="RHEA-COMP:10463"/>
        <dbReference type="Rhea" id="RHEA-COMP:13936"/>
        <dbReference type="Rhea" id="RHEA-COMP:17355"/>
        <dbReference type="ChEBI" id="CHEBI:33019"/>
        <dbReference type="ChEBI" id="CHEBI:37565"/>
        <dbReference type="ChEBI" id="CHEBI:58115"/>
        <dbReference type="ChEBI" id="CHEBI:83062"/>
        <dbReference type="ChEBI" id="CHEBI:138284"/>
        <dbReference type="ChEBI" id="CHEBI:173118"/>
        <dbReference type="EC" id="6.5.1.8"/>
    </reaction>
</comment>
<comment type="catalytic activity">
    <reaction evidence="1">
        <text>a 3'-end 2',3'-cyclophospho-ribonucleotide-RNA + a 5'-end dephospho-ribonucleoside-RNA + GTP + H2O = a ribonucleotidyl-ribonucleotide-RNA + GMP + diphosphate + H(+)</text>
        <dbReference type="Rhea" id="RHEA:68080"/>
        <dbReference type="Rhea" id="RHEA-COMP:10464"/>
        <dbReference type="Rhea" id="RHEA-COMP:13936"/>
        <dbReference type="Rhea" id="RHEA-COMP:17355"/>
        <dbReference type="ChEBI" id="CHEBI:15377"/>
        <dbReference type="ChEBI" id="CHEBI:15378"/>
        <dbReference type="ChEBI" id="CHEBI:33019"/>
        <dbReference type="ChEBI" id="CHEBI:37565"/>
        <dbReference type="ChEBI" id="CHEBI:58115"/>
        <dbReference type="ChEBI" id="CHEBI:83064"/>
        <dbReference type="ChEBI" id="CHEBI:138284"/>
        <dbReference type="ChEBI" id="CHEBI:173118"/>
        <dbReference type="EC" id="6.5.1.8"/>
    </reaction>
</comment>
<comment type="cofactor">
    <cofactor evidence="1">
        <name>Mn(2+)</name>
        <dbReference type="ChEBI" id="CHEBI:29035"/>
    </cofactor>
    <text evidence="1">Binds 2 manganese ions per subunit.</text>
</comment>
<comment type="subunit">
    <text evidence="1">Catalytic component of the tRNA-splicing ligase complex.</text>
</comment>
<comment type="miscellaneous">
    <text evidence="1">Ligation probably proceeds through 3 nucleotidyl transfer steps, with 2',3'-cyclic phosphate termini being hydrolyzed to 3'-P termini in a step that precedes 3'-P activation with GMP. In the first nucleotidyl transfer step, RTCB reacts with GTP to form a covalent RTCB-histidine-GMP intermediate with release of PPi; in the second step, the GMP moiety is transferred to the RNA 3'-P; in the third step, the 5'-OH from the opposite RNA strand attacks the activated 3'-P to form a 3',5'-phosphodiester bond and release GMP.</text>
</comment>
<comment type="similarity">
    <text evidence="1">Belongs to the RtcB family.</text>
</comment>
<name>RTCB_CHLRE</name>
<proteinExistence type="inferred from homology"/>
<gene>
    <name type="ORF">CHLREDRAFT_139581</name>
</gene>
<dbReference type="EC" id="6.5.1.8" evidence="1"/>
<dbReference type="EMBL" id="DS496155">
    <property type="protein sequence ID" value="EDO98584.1"/>
    <property type="molecule type" value="Genomic_DNA"/>
</dbReference>
<dbReference type="RefSeq" id="XP_001699521.1">
    <property type="nucleotide sequence ID" value="XM_001699469.1"/>
</dbReference>
<dbReference type="SMR" id="A8JC00"/>
<dbReference type="PaxDb" id="3055-EDO98584"/>
<dbReference type="GeneID" id="5725070"/>
<dbReference type="KEGG" id="cre:CHLRE_11g467766v5"/>
<dbReference type="eggNOG" id="KOG3833">
    <property type="taxonomic scope" value="Eukaryota"/>
</dbReference>
<dbReference type="HOGENOM" id="CLU_022279_0_0_1"/>
<dbReference type="OrthoDB" id="10249697at2759"/>
<dbReference type="GO" id="GO:0072669">
    <property type="term" value="C:tRNA-splicing ligase complex"/>
    <property type="evidence" value="ECO:0007669"/>
    <property type="project" value="UniProtKB-UniRule"/>
</dbReference>
<dbReference type="GO" id="GO:0005525">
    <property type="term" value="F:GTP binding"/>
    <property type="evidence" value="ECO:0007669"/>
    <property type="project" value="UniProtKB-KW"/>
</dbReference>
<dbReference type="GO" id="GO:0046872">
    <property type="term" value="F:metal ion binding"/>
    <property type="evidence" value="ECO:0007669"/>
    <property type="project" value="UniProtKB-KW"/>
</dbReference>
<dbReference type="GO" id="GO:0170057">
    <property type="term" value="F:RNA ligase (GTP) activity"/>
    <property type="evidence" value="ECO:0007669"/>
    <property type="project" value="UniProtKB-EC"/>
</dbReference>
<dbReference type="GO" id="GO:0006388">
    <property type="term" value="P:tRNA splicing, via endonucleolytic cleavage and ligation"/>
    <property type="evidence" value="ECO:0007669"/>
    <property type="project" value="UniProtKB-UniRule"/>
</dbReference>
<dbReference type="FunFam" id="3.90.1860.10:FF:000001">
    <property type="entry name" value="tRNA-splicing ligase RtcB homolog"/>
    <property type="match status" value="1"/>
</dbReference>
<dbReference type="Gene3D" id="3.90.1860.10">
    <property type="entry name" value="tRNA-splicing ligase RtcB"/>
    <property type="match status" value="1"/>
</dbReference>
<dbReference type="HAMAP" id="MF_03144">
    <property type="entry name" value="RtcB_euk"/>
    <property type="match status" value="1"/>
</dbReference>
<dbReference type="InterPro" id="IPR001233">
    <property type="entry name" value="RtcB"/>
</dbReference>
<dbReference type="InterPro" id="IPR036025">
    <property type="entry name" value="RtcB-like_sf"/>
</dbReference>
<dbReference type="InterPro" id="IPR027513">
    <property type="entry name" value="RtcB_euk"/>
</dbReference>
<dbReference type="PANTHER" id="PTHR11118">
    <property type="entry name" value="RNA-SPLICING LIGASE RTCB HOMOLOG"/>
    <property type="match status" value="1"/>
</dbReference>
<dbReference type="PANTHER" id="PTHR11118:SF1">
    <property type="entry name" value="RNA-SPLICING LIGASE RTCB HOMOLOG"/>
    <property type="match status" value="1"/>
</dbReference>
<dbReference type="Pfam" id="PF01139">
    <property type="entry name" value="RtcB"/>
    <property type="match status" value="1"/>
</dbReference>
<dbReference type="SUPFAM" id="SSF103365">
    <property type="entry name" value="Hypothetical protein PH1602"/>
    <property type="match status" value="1"/>
</dbReference>
<dbReference type="PROSITE" id="PS01288">
    <property type="entry name" value="UPF0027"/>
    <property type="match status" value="1"/>
</dbReference>
<organism>
    <name type="scientific">Chlamydomonas reinhardtii</name>
    <name type="common">Chlamydomonas smithii</name>
    <dbReference type="NCBI Taxonomy" id="3055"/>
    <lineage>
        <taxon>Eukaryota</taxon>
        <taxon>Viridiplantae</taxon>
        <taxon>Chlorophyta</taxon>
        <taxon>core chlorophytes</taxon>
        <taxon>Chlorophyceae</taxon>
        <taxon>CS clade</taxon>
        <taxon>Chlamydomonadales</taxon>
        <taxon>Chlamydomonadaceae</taxon>
        <taxon>Chlamydomonas</taxon>
    </lineage>
</organism>
<keyword id="KW-0342">GTP-binding</keyword>
<keyword id="KW-0436">Ligase</keyword>
<keyword id="KW-0464">Manganese</keyword>
<keyword id="KW-0479">Metal-binding</keyword>
<keyword id="KW-0547">Nucleotide-binding</keyword>
<keyword id="KW-0819">tRNA processing</keyword>
<feature type="chain" id="PRO_0000407233" description="RNA-splicing ligase RtcB homolog">
    <location>
        <begin position="1"/>
        <end position="476"/>
    </location>
</feature>
<feature type="active site" description="GMP-histidine intermediate" evidence="1">
    <location>
        <position position="399"/>
    </location>
</feature>
<feature type="binding site" evidence="1">
    <location>
        <position position="90"/>
    </location>
    <ligand>
        <name>Mn(2+)</name>
        <dbReference type="ChEBI" id="CHEBI:29035"/>
        <label>1</label>
    </ligand>
</feature>
<feature type="binding site" evidence="1">
    <location>
        <position position="93"/>
    </location>
    <ligand>
        <name>Mn(2+)</name>
        <dbReference type="ChEBI" id="CHEBI:29035"/>
        <label>1</label>
    </ligand>
</feature>
<feature type="binding site" evidence="1">
    <location>
        <position position="93"/>
    </location>
    <ligand>
        <name>Mn(2+)</name>
        <dbReference type="ChEBI" id="CHEBI:29035"/>
        <label>2</label>
    </ligand>
</feature>
<feature type="binding site" evidence="1">
    <location>
        <begin position="197"/>
        <end position="201"/>
    </location>
    <ligand>
        <name>GMP</name>
        <dbReference type="ChEBI" id="CHEBI:58115"/>
    </ligand>
</feature>
<feature type="binding site" evidence="1">
    <location>
        <position position="198"/>
    </location>
    <ligand>
        <name>Mn(2+)</name>
        <dbReference type="ChEBI" id="CHEBI:29035"/>
        <label>1</label>
    </ligand>
</feature>
<feature type="binding site" evidence="1">
    <location>
        <position position="230"/>
    </location>
    <ligand>
        <name>Mn(2+)</name>
        <dbReference type="ChEBI" id="CHEBI:29035"/>
        <label>2</label>
    </ligand>
</feature>
<feature type="binding site" evidence="1">
    <location>
        <begin position="324"/>
        <end position="325"/>
    </location>
    <ligand>
        <name>GMP</name>
        <dbReference type="ChEBI" id="CHEBI:58115"/>
    </ligand>
</feature>
<feature type="binding site" evidence="1">
    <location>
        <position position="324"/>
    </location>
    <ligand>
        <name>Mn(2+)</name>
        <dbReference type="ChEBI" id="CHEBI:29035"/>
        <label>2</label>
    </ligand>
</feature>
<feature type="binding site" evidence="1">
    <location>
        <begin position="373"/>
        <end position="376"/>
    </location>
    <ligand>
        <name>GMP</name>
        <dbReference type="ChEBI" id="CHEBI:58115"/>
    </ligand>
</feature>
<feature type="binding site" evidence="1">
    <location>
        <position position="380"/>
    </location>
    <ligand>
        <name>GMP</name>
        <dbReference type="ChEBI" id="CHEBI:58115"/>
    </ligand>
</feature>
<feature type="binding site" evidence="1">
    <location>
        <begin position="399"/>
        <end position="402"/>
    </location>
    <ligand>
        <name>GMP</name>
        <dbReference type="ChEBI" id="CHEBI:58115"/>
    </ligand>
</feature>
<feature type="binding site" evidence="1">
    <location>
        <position position="475"/>
    </location>
    <ligand>
        <name>GMP</name>
        <dbReference type="ChEBI" id="CHEBI:58115"/>
    </ligand>
</feature>
<protein>
    <recommendedName>
        <fullName evidence="1">RNA-splicing ligase RtcB homolog</fullName>
        <ecNumber evidence="1">6.5.1.8</ecNumber>
    </recommendedName>
    <alternativeName>
        <fullName evidence="1">3'-phosphate/5'-hydroxy nucleic acid ligase</fullName>
    </alternativeName>
</protein>
<sequence>MHVPGTFYVNDALKGLLFEELQQAVVRGDHGGFLPAVKQLANVAALPGIVKRSIALPDVHSGYGFAIGNVAAFDMDNPEAVVSPGGVGFDINCGVRLLRTNLTEAEVGPVREQLAQALFDHIPVGVGSQGIIPTTAKDMESALELGMDWSLREGYAWAEDKEHCEEYGRMLNADPRYVSSRAKKRGLPQMGTLGAGNHYAEVQVVDEVYDAVAARRMGIDTPGQVVVMIHSGSRGLGHQVATDALVAMERAMARDGIITNDRQLACARINSEEGQAYLKAMSCAANYAWVNRSSMTFLARQAFAKIFKSTPDDLDMHVVYDVSHNIAKVEQHCVDGQHRRLLVHRKGSTRAFPPHHPLIPADYQLIGQPVLVGGTMGTSSYVLTGTEQGFTETFGSTCHGAGRARSRNNSRNKLDYQDVLDNLKAKGIAIRVASPKLVMEEAPESYKDVSEVVDTCHQAGISKKAVKLRPIAVIKG</sequence>
<reference key="1">
    <citation type="journal article" date="2007" name="Science">
        <title>The Chlamydomonas genome reveals the evolution of key animal and plant functions.</title>
        <authorList>
            <person name="Merchant S.S."/>
            <person name="Prochnik S.E."/>
            <person name="Vallon O."/>
            <person name="Harris E.H."/>
            <person name="Karpowicz S.J."/>
            <person name="Witman G.B."/>
            <person name="Terry A."/>
            <person name="Salamov A."/>
            <person name="Fritz-Laylin L.K."/>
            <person name="Marechal-Drouard L."/>
            <person name="Marshall W.F."/>
            <person name="Qu L.H."/>
            <person name="Nelson D.R."/>
            <person name="Sanderfoot A.A."/>
            <person name="Spalding M.H."/>
            <person name="Kapitonov V.V."/>
            <person name="Ren Q."/>
            <person name="Ferris P."/>
            <person name="Lindquist E."/>
            <person name="Shapiro H."/>
            <person name="Lucas S.M."/>
            <person name="Grimwood J."/>
            <person name="Schmutz J."/>
            <person name="Cardol P."/>
            <person name="Cerutti H."/>
            <person name="Chanfreau G."/>
            <person name="Chen C.L."/>
            <person name="Cognat V."/>
            <person name="Croft M.T."/>
            <person name="Dent R."/>
            <person name="Dutcher S."/>
            <person name="Fernandez E."/>
            <person name="Fukuzawa H."/>
            <person name="Gonzalez-Ballester D."/>
            <person name="Gonzalez-Halphen D."/>
            <person name="Hallmann A."/>
            <person name="Hanikenne M."/>
            <person name="Hippler M."/>
            <person name="Inwood W."/>
            <person name="Jabbari K."/>
            <person name="Kalanon M."/>
            <person name="Kuras R."/>
            <person name="Lefebvre P.A."/>
            <person name="Lemaire S.D."/>
            <person name="Lobanov A.V."/>
            <person name="Lohr M."/>
            <person name="Manuell A."/>
            <person name="Meier I."/>
            <person name="Mets L."/>
            <person name="Mittag M."/>
            <person name="Mittelmeier T."/>
            <person name="Moroney J.V."/>
            <person name="Moseley J."/>
            <person name="Napoli C."/>
            <person name="Nedelcu A.M."/>
            <person name="Niyogi K."/>
            <person name="Novoselov S.V."/>
            <person name="Paulsen I.T."/>
            <person name="Pazour G.J."/>
            <person name="Purton S."/>
            <person name="Ral J.P."/>
            <person name="Riano-Pachon D.M."/>
            <person name="Riekhof W."/>
            <person name="Rymarquis L."/>
            <person name="Schroda M."/>
            <person name="Stern D."/>
            <person name="Umen J."/>
            <person name="Willows R."/>
            <person name="Wilson N."/>
            <person name="Zimmer S.L."/>
            <person name="Allmer J."/>
            <person name="Balk J."/>
            <person name="Bisova K."/>
            <person name="Chen C.J."/>
            <person name="Elias M."/>
            <person name="Gendler K."/>
            <person name="Hauser C."/>
            <person name="Lamb M.R."/>
            <person name="Ledford H."/>
            <person name="Long J.C."/>
            <person name="Minagawa J."/>
            <person name="Page M.D."/>
            <person name="Pan J."/>
            <person name="Pootakham W."/>
            <person name="Roje S."/>
            <person name="Rose A."/>
            <person name="Stahlberg E."/>
            <person name="Terauchi A.M."/>
            <person name="Yang P."/>
            <person name="Ball S."/>
            <person name="Bowler C."/>
            <person name="Dieckmann C.L."/>
            <person name="Gladyshev V.N."/>
            <person name="Green P."/>
            <person name="Jorgensen R."/>
            <person name="Mayfield S."/>
            <person name="Mueller-Roeber B."/>
            <person name="Rajamani S."/>
            <person name="Sayre R.T."/>
            <person name="Brokstein P."/>
            <person name="Dubchak I."/>
            <person name="Goodstein D."/>
            <person name="Hornick L."/>
            <person name="Huang Y.W."/>
            <person name="Jhaveri J."/>
            <person name="Luo Y."/>
            <person name="Martinez D."/>
            <person name="Ngau W.C."/>
            <person name="Otillar B."/>
            <person name="Poliakov A."/>
            <person name="Porter A."/>
            <person name="Szajkowski L."/>
            <person name="Werner G."/>
            <person name="Zhou K."/>
            <person name="Grigoriev I.V."/>
            <person name="Rokhsar D.S."/>
            <person name="Grossman A.R."/>
        </authorList>
    </citation>
    <scope>NUCLEOTIDE SEQUENCE [LARGE SCALE GENOMIC DNA]</scope>
    <source>
        <strain>CC-503</strain>
        <strain>cw92</strain>
    </source>
</reference>
<evidence type="ECO:0000255" key="1">
    <source>
        <dbReference type="HAMAP-Rule" id="MF_03144"/>
    </source>
</evidence>
<accession>A8JC00</accession>